<evidence type="ECO:0000256" key="1">
    <source>
        <dbReference type="SAM" id="MobiDB-lite"/>
    </source>
</evidence>
<evidence type="ECO:0000269" key="2">
    <source>
    </source>
</evidence>
<evidence type="ECO:0000269" key="3">
    <source>
    </source>
</evidence>
<evidence type="ECO:0000269" key="4">
    <source>
    </source>
</evidence>
<evidence type="ECO:0000269" key="5">
    <source>
    </source>
</evidence>
<evidence type="ECO:0000303" key="6">
    <source>
    </source>
</evidence>
<evidence type="ECO:0000303" key="7">
    <source ref="2"/>
</evidence>
<evidence type="ECO:0000305" key="8"/>
<evidence type="ECO:0007744" key="9">
    <source>
    </source>
</evidence>
<evidence type="ECO:0007744" key="10">
    <source>
    </source>
</evidence>
<evidence type="ECO:0007744" key="11">
    <source>
    </source>
</evidence>
<evidence type="ECO:0007744" key="12">
    <source>
    </source>
</evidence>
<evidence type="ECO:0007744" key="13">
    <source>
    </source>
</evidence>
<feature type="chain" id="PRO_0000089827" description="Mini-chromosome maintenance complex-binding protein">
    <location>
        <begin position="1"/>
        <end position="642"/>
    </location>
</feature>
<feature type="region of interest" description="Disordered" evidence="1">
    <location>
        <begin position="151"/>
        <end position="197"/>
    </location>
</feature>
<feature type="compositionally biased region" description="Polar residues" evidence="1">
    <location>
        <begin position="151"/>
        <end position="161"/>
    </location>
</feature>
<feature type="modified residue" description="Phosphoserine" evidence="9 10 11 12 13">
    <location>
        <position position="154"/>
    </location>
</feature>
<feature type="modified residue" description="Phosphothreonine" evidence="9">
    <location>
        <position position="160"/>
    </location>
</feature>
<feature type="modified residue" description="Phosphoserine" evidence="12">
    <location>
        <position position="167"/>
    </location>
</feature>
<feature type="modified residue" description="Phosphoserine" evidence="9 12">
    <location>
        <position position="298"/>
    </location>
</feature>
<feature type="splice variant" id="VSP_040721" description="In isoform 3." evidence="8">
    <location>
        <begin position="1"/>
        <end position="173"/>
    </location>
</feature>
<feature type="splice variant" id="VSP_014707" description="In isoform 2 and isoform 3." evidence="6 7">
    <location>
        <begin position="334"/>
        <end position="335"/>
    </location>
</feature>
<feature type="sequence conflict" description="In Ref. 2; CAG33580." evidence="8" ref="2">
    <original>H</original>
    <variation>Y</variation>
    <location>
        <position position="164"/>
    </location>
</feature>
<feature type="sequence conflict" description="In Ref. 2; CAG33580." evidence="8" ref="2">
    <original>E</original>
    <variation>V</variation>
    <location>
        <position position="350"/>
    </location>
</feature>
<feature type="sequence conflict" description="In Ref. 1; BAG52809." evidence="8" ref="1">
    <original>T</original>
    <variation>A</variation>
    <location>
        <position position="610"/>
    </location>
</feature>
<reference key="1">
    <citation type="journal article" date="2004" name="Nat. Genet.">
        <title>Complete sequencing and characterization of 21,243 full-length human cDNAs.</title>
        <authorList>
            <person name="Ota T."/>
            <person name="Suzuki Y."/>
            <person name="Nishikawa T."/>
            <person name="Otsuki T."/>
            <person name="Sugiyama T."/>
            <person name="Irie R."/>
            <person name="Wakamatsu A."/>
            <person name="Hayashi K."/>
            <person name="Sato H."/>
            <person name="Nagai K."/>
            <person name="Kimura K."/>
            <person name="Makita H."/>
            <person name="Sekine M."/>
            <person name="Obayashi M."/>
            <person name="Nishi T."/>
            <person name="Shibahara T."/>
            <person name="Tanaka T."/>
            <person name="Ishii S."/>
            <person name="Yamamoto J."/>
            <person name="Saito K."/>
            <person name="Kawai Y."/>
            <person name="Isono Y."/>
            <person name="Nakamura Y."/>
            <person name="Nagahari K."/>
            <person name="Murakami K."/>
            <person name="Yasuda T."/>
            <person name="Iwayanagi T."/>
            <person name="Wagatsuma M."/>
            <person name="Shiratori A."/>
            <person name="Sudo H."/>
            <person name="Hosoiri T."/>
            <person name="Kaku Y."/>
            <person name="Kodaira H."/>
            <person name="Kondo H."/>
            <person name="Sugawara M."/>
            <person name="Takahashi M."/>
            <person name="Kanda K."/>
            <person name="Yokoi T."/>
            <person name="Furuya T."/>
            <person name="Kikkawa E."/>
            <person name="Omura Y."/>
            <person name="Abe K."/>
            <person name="Kamihara K."/>
            <person name="Katsuta N."/>
            <person name="Sato K."/>
            <person name="Tanikawa M."/>
            <person name="Yamazaki M."/>
            <person name="Ninomiya K."/>
            <person name="Ishibashi T."/>
            <person name="Yamashita H."/>
            <person name="Murakawa K."/>
            <person name="Fujimori K."/>
            <person name="Tanai H."/>
            <person name="Kimata M."/>
            <person name="Watanabe M."/>
            <person name="Hiraoka S."/>
            <person name="Chiba Y."/>
            <person name="Ishida S."/>
            <person name="Ono Y."/>
            <person name="Takiguchi S."/>
            <person name="Watanabe S."/>
            <person name="Yosida M."/>
            <person name="Hotuta T."/>
            <person name="Kusano J."/>
            <person name="Kanehori K."/>
            <person name="Takahashi-Fujii A."/>
            <person name="Hara H."/>
            <person name="Tanase T.-O."/>
            <person name="Nomura Y."/>
            <person name="Togiya S."/>
            <person name="Komai F."/>
            <person name="Hara R."/>
            <person name="Takeuchi K."/>
            <person name="Arita M."/>
            <person name="Imose N."/>
            <person name="Musashino K."/>
            <person name="Yuuki H."/>
            <person name="Oshima A."/>
            <person name="Sasaki N."/>
            <person name="Aotsuka S."/>
            <person name="Yoshikawa Y."/>
            <person name="Matsunawa H."/>
            <person name="Ichihara T."/>
            <person name="Shiohata N."/>
            <person name="Sano S."/>
            <person name="Moriya S."/>
            <person name="Momiyama H."/>
            <person name="Satoh N."/>
            <person name="Takami S."/>
            <person name="Terashima Y."/>
            <person name="Suzuki O."/>
            <person name="Nakagawa S."/>
            <person name="Senoh A."/>
            <person name="Mizoguchi H."/>
            <person name="Goto Y."/>
            <person name="Shimizu F."/>
            <person name="Wakebe H."/>
            <person name="Hishigaki H."/>
            <person name="Watanabe T."/>
            <person name="Sugiyama A."/>
            <person name="Takemoto M."/>
            <person name="Kawakami B."/>
            <person name="Yamazaki M."/>
            <person name="Watanabe K."/>
            <person name="Kumagai A."/>
            <person name="Itakura S."/>
            <person name="Fukuzumi Y."/>
            <person name="Fujimori Y."/>
            <person name="Komiyama M."/>
            <person name="Tashiro H."/>
            <person name="Tanigami A."/>
            <person name="Fujiwara T."/>
            <person name="Ono T."/>
            <person name="Yamada K."/>
            <person name="Fujii Y."/>
            <person name="Ozaki K."/>
            <person name="Hirao M."/>
            <person name="Ohmori Y."/>
            <person name="Kawabata A."/>
            <person name="Hikiji T."/>
            <person name="Kobatake N."/>
            <person name="Inagaki H."/>
            <person name="Ikema Y."/>
            <person name="Okamoto S."/>
            <person name="Okitani R."/>
            <person name="Kawakami T."/>
            <person name="Noguchi S."/>
            <person name="Itoh T."/>
            <person name="Shigeta K."/>
            <person name="Senba T."/>
            <person name="Matsumura K."/>
            <person name="Nakajima Y."/>
            <person name="Mizuno T."/>
            <person name="Morinaga M."/>
            <person name="Sasaki M."/>
            <person name="Togashi T."/>
            <person name="Oyama M."/>
            <person name="Hata H."/>
            <person name="Watanabe M."/>
            <person name="Komatsu T."/>
            <person name="Mizushima-Sugano J."/>
            <person name="Satoh T."/>
            <person name="Shirai Y."/>
            <person name="Takahashi Y."/>
            <person name="Nakagawa K."/>
            <person name="Okumura K."/>
            <person name="Nagase T."/>
            <person name="Nomura N."/>
            <person name="Kikuchi H."/>
            <person name="Masuho Y."/>
            <person name="Yamashita R."/>
            <person name="Nakai K."/>
            <person name="Yada T."/>
            <person name="Nakamura Y."/>
            <person name="Ohara O."/>
            <person name="Isogai T."/>
            <person name="Sugano S."/>
        </authorList>
    </citation>
    <scope>NUCLEOTIDE SEQUENCE [LARGE SCALE MRNA] (ISOFORM 1)</scope>
    <source>
        <tissue>Uterus</tissue>
    </source>
</reference>
<reference key="2">
    <citation type="submission" date="2004-06" db="EMBL/GenBank/DDBJ databases">
        <title>Cloning of human full open reading frames in Gateway(TM) system entry vector (pDONR201).</title>
        <authorList>
            <person name="Ebert L."/>
            <person name="Schick M."/>
            <person name="Neubert P."/>
            <person name="Schatten R."/>
            <person name="Henze S."/>
            <person name="Korn B."/>
        </authorList>
    </citation>
    <scope>NUCLEOTIDE SEQUENCE [LARGE SCALE MRNA] (ISOFORM 2)</scope>
</reference>
<reference key="3">
    <citation type="journal article" date="2004" name="Nature">
        <title>The DNA sequence and comparative analysis of human chromosome 10.</title>
        <authorList>
            <person name="Deloukas P."/>
            <person name="Earthrowl M.E."/>
            <person name="Grafham D.V."/>
            <person name="Rubenfield M."/>
            <person name="French L."/>
            <person name="Steward C.A."/>
            <person name="Sims S.K."/>
            <person name="Jones M.C."/>
            <person name="Searle S."/>
            <person name="Scott C."/>
            <person name="Howe K."/>
            <person name="Hunt S.E."/>
            <person name="Andrews T.D."/>
            <person name="Gilbert J.G.R."/>
            <person name="Swarbreck D."/>
            <person name="Ashurst J.L."/>
            <person name="Taylor A."/>
            <person name="Battles J."/>
            <person name="Bird C.P."/>
            <person name="Ainscough R."/>
            <person name="Almeida J.P."/>
            <person name="Ashwell R.I.S."/>
            <person name="Ambrose K.D."/>
            <person name="Babbage A.K."/>
            <person name="Bagguley C.L."/>
            <person name="Bailey J."/>
            <person name="Banerjee R."/>
            <person name="Bates K."/>
            <person name="Beasley H."/>
            <person name="Bray-Allen S."/>
            <person name="Brown A.J."/>
            <person name="Brown J.Y."/>
            <person name="Burford D.C."/>
            <person name="Burrill W."/>
            <person name="Burton J."/>
            <person name="Cahill P."/>
            <person name="Camire D."/>
            <person name="Carter N.P."/>
            <person name="Chapman J.C."/>
            <person name="Clark S.Y."/>
            <person name="Clarke G."/>
            <person name="Clee C.M."/>
            <person name="Clegg S."/>
            <person name="Corby N."/>
            <person name="Coulson A."/>
            <person name="Dhami P."/>
            <person name="Dutta I."/>
            <person name="Dunn M."/>
            <person name="Faulkner L."/>
            <person name="Frankish A."/>
            <person name="Frankland J.A."/>
            <person name="Garner P."/>
            <person name="Garnett J."/>
            <person name="Gribble S."/>
            <person name="Griffiths C."/>
            <person name="Grocock R."/>
            <person name="Gustafson E."/>
            <person name="Hammond S."/>
            <person name="Harley J.L."/>
            <person name="Hart E."/>
            <person name="Heath P.D."/>
            <person name="Ho T.P."/>
            <person name="Hopkins B."/>
            <person name="Horne J."/>
            <person name="Howden P.J."/>
            <person name="Huckle E."/>
            <person name="Hynds C."/>
            <person name="Johnson C."/>
            <person name="Johnson D."/>
            <person name="Kana A."/>
            <person name="Kay M."/>
            <person name="Kimberley A.M."/>
            <person name="Kershaw J.K."/>
            <person name="Kokkinaki M."/>
            <person name="Laird G.K."/>
            <person name="Lawlor S."/>
            <person name="Lee H.M."/>
            <person name="Leongamornlert D.A."/>
            <person name="Laird G."/>
            <person name="Lloyd C."/>
            <person name="Lloyd D.M."/>
            <person name="Loveland J."/>
            <person name="Lovell J."/>
            <person name="McLaren S."/>
            <person name="McLay K.E."/>
            <person name="McMurray A."/>
            <person name="Mashreghi-Mohammadi M."/>
            <person name="Matthews L."/>
            <person name="Milne S."/>
            <person name="Nickerson T."/>
            <person name="Nguyen M."/>
            <person name="Overton-Larty E."/>
            <person name="Palmer S.A."/>
            <person name="Pearce A.V."/>
            <person name="Peck A.I."/>
            <person name="Pelan S."/>
            <person name="Phillimore B."/>
            <person name="Porter K."/>
            <person name="Rice C.M."/>
            <person name="Rogosin A."/>
            <person name="Ross M.T."/>
            <person name="Sarafidou T."/>
            <person name="Sehra H.K."/>
            <person name="Shownkeen R."/>
            <person name="Skuce C.D."/>
            <person name="Smith M."/>
            <person name="Standring L."/>
            <person name="Sycamore N."/>
            <person name="Tester J."/>
            <person name="Thorpe A."/>
            <person name="Torcasso W."/>
            <person name="Tracey A."/>
            <person name="Tromans A."/>
            <person name="Tsolas J."/>
            <person name="Wall M."/>
            <person name="Walsh J."/>
            <person name="Wang H."/>
            <person name="Weinstock K."/>
            <person name="West A.P."/>
            <person name="Willey D.L."/>
            <person name="Whitehead S.L."/>
            <person name="Wilming L."/>
            <person name="Wray P.W."/>
            <person name="Young L."/>
            <person name="Chen Y."/>
            <person name="Lovering R.C."/>
            <person name="Moschonas N.K."/>
            <person name="Siebert R."/>
            <person name="Fechtel K."/>
            <person name="Bentley D."/>
            <person name="Durbin R.M."/>
            <person name="Hubbard T."/>
            <person name="Doucette-Stamm L."/>
            <person name="Beck S."/>
            <person name="Smith D.R."/>
            <person name="Rogers J."/>
        </authorList>
    </citation>
    <scope>NUCLEOTIDE SEQUENCE [LARGE SCALE GENOMIC DNA]</scope>
</reference>
<reference key="4">
    <citation type="journal article" date="2004" name="Genome Res.">
        <title>The status, quality, and expansion of the NIH full-length cDNA project: the Mammalian Gene Collection (MGC).</title>
        <authorList>
            <consortium name="The MGC Project Team"/>
        </authorList>
    </citation>
    <scope>NUCLEOTIDE SEQUENCE [LARGE SCALE MRNA] (ISOFORM 2)</scope>
    <scope>NUCLEOTIDE SEQUENCE [LARGE SCALE MRNA] OF 340-642 (ISOFORMS 1/2)</scope>
    <source>
        <tissue>Muscle</tissue>
        <tissue>Placenta</tissue>
    </source>
</reference>
<reference key="5">
    <citation type="journal article" date="2007" name="Mol. Cell. Biol.">
        <title>Identification and characterization of a novel component of the human minichromosome maintenance complex.</title>
        <authorList>
            <person name="Sakwe A.M."/>
            <person name="Nguyen T."/>
            <person name="Athanasopoulos V."/>
            <person name="Shire K."/>
            <person name="Frappier L."/>
        </authorList>
    </citation>
    <scope>SUBCELLULAR LOCATION</scope>
    <scope>IDENTIFICATION BY MASS SPECTROMETRY</scope>
    <scope>INTERACTION WITH THE MCM COMPLEX</scope>
</reference>
<reference key="6">
    <citation type="journal article" date="2008" name="Proc. Natl. Acad. Sci. U.S.A.">
        <title>A quantitative atlas of mitotic phosphorylation.</title>
        <authorList>
            <person name="Dephoure N."/>
            <person name="Zhou C."/>
            <person name="Villen J."/>
            <person name="Beausoleil S.A."/>
            <person name="Bakalarski C.E."/>
            <person name="Elledge S.J."/>
            <person name="Gygi S.P."/>
        </authorList>
    </citation>
    <scope>PHOSPHORYLATION [LARGE SCALE ANALYSIS] AT SER-154; THR-160 AND SER-298</scope>
    <scope>IDENTIFICATION BY MASS SPECTROMETRY [LARGE SCALE ANALYSIS]</scope>
    <source>
        <tissue>Cervix carcinoma</tissue>
    </source>
</reference>
<reference key="7">
    <citation type="journal article" date="2009" name="Anal. Chem.">
        <title>Lys-N and trypsin cover complementary parts of the phosphoproteome in a refined SCX-based approach.</title>
        <authorList>
            <person name="Gauci S."/>
            <person name="Helbig A.O."/>
            <person name="Slijper M."/>
            <person name="Krijgsveld J."/>
            <person name="Heck A.J."/>
            <person name="Mohammed S."/>
        </authorList>
    </citation>
    <scope>IDENTIFICATION BY MASS SPECTROMETRY [LARGE SCALE ANALYSIS]</scope>
</reference>
<reference key="8">
    <citation type="journal article" date="2009" name="Science">
        <title>Lysine acetylation targets protein complexes and co-regulates major cellular functions.</title>
        <authorList>
            <person name="Choudhary C."/>
            <person name="Kumar C."/>
            <person name="Gnad F."/>
            <person name="Nielsen M.L."/>
            <person name="Rehman M."/>
            <person name="Walther T.C."/>
            <person name="Olsen J.V."/>
            <person name="Mann M."/>
        </authorList>
    </citation>
    <scope>IDENTIFICATION BY MASS SPECTROMETRY [LARGE SCALE ANALYSIS]</scope>
</reference>
<reference key="9">
    <citation type="journal article" date="2010" name="J. Biochem.">
        <title>Identification of proteins that may directly interact with human RPA.</title>
        <authorList>
            <person name="Nakaya R."/>
            <person name="Takaya J."/>
            <person name="Onuki T."/>
            <person name="Moritani M."/>
            <person name="Nozaki N."/>
            <person name="Ishimi Y."/>
        </authorList>
    </citation>
    <scope>INTERACTION WITH THE RPA COMPLEX</scope>
</reference>
<reference key="10">
    <citation type="journal article" date="2010" name="PLoS Genet.">
        <title>The MCM-binding protein ETG1 aids sister chromatid cohesion required for postreplicative homologous recombination repair.</title>
        <authorList>
            <person name="Takahashi N."/>
            <person name="Quimbaya M."/>
            <person name="Schubert V."/>
            <person name="Lammens T."/>
            <person name="Vandepoele K."/>
            <person name="Schubert I."/>
            <person name="Matsui M."/>
            <person name="Inze D."/>
            <person name="Berx G."/>
            <person name="De Veylder L."/>
        </authorList>
    </citation>
    <scope>FUNCTION</scope>
</reference>
<reference key="11">
    <citation type="journal article" date="2010" name="Sci. Signal.">
        <title>Quantitative phosphoproteomics reveals widespread full phosphorylation site occupancy during mitosis.</title>
        <authorList>
            <person name="Olsen J.V."/>
            <person name="Vermeulen M."/>
            <person name="Santamaria A."/>
            <person name="Kumar C."/>
            <person name="Miller M.L."/>
            <person name="Jensen L.J."/>
            <person name="Gnad F."/>
            <person name="Cox J."/>
            <person name="Jensen T.S."/>
            <person name="Nigg E.A."/>
            <person name="Brunak S."/>
            <person name="Mann M."/>
        </authorList>
    </citation>
    <scope>PHOSPHORYLATION [LARGE SCALE ANALYSIS] AT SER-154</scope>
    <scope>IDENTIFICATION BY MASS SPECTROMETRY [LARGE SCALE ANALYSIS]</scope>
    <source>
        <tissue>Cervix carcinoma</tissue>
    </source>
</reference>
<reference key="12">
    <citation type="journal article" date="2011" name="BMC Syst. Biol.">
        <title>Initial characterization of the human central proteome.</title>
        <authorList>
            <person name="Burkard T.R."/>
            <person name="Planyavsky M."/>
            <person name="Kaupe I."/>
            <person name="Breitwieser F.P."/>
            <person name="Buerckstuemmer T."/>
            <person name="Bennett K.L."/>
            <person name="Superti-Furga G."/>
            <person name="Colinge J."/>
        </authorList>
    </citation>
    <scope>IDENTIFICATION BY MASS SPECTROMETRY [LARGE SCALE ANALYSIS]</scope>
</reference>
<reference key="13">
    <citation type="journal article" date="2011" name="Genes Dev.">
        <title>MCM-BP regulates unloading of the MCM2-7 helicase in late S phase.</title>
        <authorList>
            <person name="Nishiyama A."/>
            <person name="Frappier L."/>
            <person name="Mechali M."/>
        </authorList>
    </citation>
    <scope>FUNCTION</scope>
</reference>
<reference key="14">
    <citation type="journal article" date="2011" name="Sci. Signal.">
        <title>System-wide temporal characterization of the proteome and phosphoproteome of human embryonic stem cell differentiation.</title>
        <authorList>
            <person name="Rigbolt K.T."/>
            <person name="Prokhorova T.A."/>
            <person name="Akimov V."/>
            <person name="Henningsen J."/>
            <person name="Johansen P.T."/>
            <person name="Kratchmarova I."/>
            <person name="Kassem M."/>
            <person name="Mann M."/>
            <person name="Olsen J.V."/>
            <person name="Blagoev B."/>
        </authorList>
    </citation>
    <scope>PHOSPHORYLATION [LARGE SCALE ANALYSIS] AT SER-154</scope>
    <scope>IDENTIFICATION BY MASS SPECTROMETRY [LARGE SCALE ANALYSIS]</scope>
</reference>
<reference key="15">
    <citation type="journal article" date="2013" name="J. Proteome Res.">
        <title>Toward a comprehensive characterization of a human cancer cell phosphoproteome.</title>
        <authorList>
            <person name="Zhou H."/>
            <person name="Di Palma S."/>
            <person name="Preisinger C."/>
            <person name="Peng M."/>
            <person name="Polat A.N."/>
            <person name="Heck A.J."/>
            <person name="Mohammed S."/>
        </authorList>
    </citation>
    <scope>PHOSPHORYLATION [LARGE SCALE ANALYSIS] AT SER-154; SER-167 AND SER-298</scope>
    <scope>IDENTIFICATION BY MASS SPECTROMETRY [LARGE SCALE ANALYSIS]</scope>
    <source>
        <tissue>Cervix carcinoma</tissue>
        <tissue>Erythroleukemia</tissue>
    </source>
</reference>
<reference key="16">
    <citation type="journal article" date="2014" name="J. Proteomics">
        <title>An enzyme assisted RP-RPLC approach for in-depth analysis of human liver phosphoproteome.</title>
        <authorList>
            <person name="Bian Y."/>
            <person name="Song C."/>
            <person name="Cheng K."/>
            <person name="Dong M."/>
            <person name="Wang F."/>
            <person name="Huang J."/>
            <person name="Sun D."/>
            <person name="Wang L."/>
            <person name="Ye M."/>
            <person name="Zou H."/>
        </authorList>
    </citation>
    <scope>PHOSPHORYLATION [LARGE SCALE ANALYSIS] AT SER-154</scope>
    <scope>IDENTIFICATION BY MASS SPECTROMETRY [LARGE SCALE ANALYSIS]</scope>
    <source>
        <tissue>Liver</tissue>
    </source>
</reference>
<dbReference type="EMBL" id="AK023143">
    <property type="protein sequence ID" value="BAB14427.1"/>
    <property type="molecule type" value="mRNA"/>
</dbReference>
<dbReference type="EMBL" id="AK094075">
    <property type="protein sequence ID" value="BAG52809.1"/>
    <property type="molecule type" value="mRNA"/>
</dbReference>
<dbReference type="EMBL" id="CR457299">
    <property type="protein sequence ID" value="CAG33580.1"/>
    <property type="molecule type" value="mRNA"/>
</dbReference>
<dbReference type="EMBL" id="AC027672">
    <property type="status" value="NOT_ANNOTATED_CDS"/>
    <property type="molecule type" value="Genomic_DNA"/>
</dbReference>
<dbReference type="EMBL" id="BC000935">
    <property type="protein sequence ID" value="AAH00935.1"/>
    <property type="molecule type" value="mRNA"/>
</dbReference>
<dbReference type="EMBL" id="BC004183">
    <property type="protein sequence ID" value="AAH04183.1"/>
    <property type="molecule type" value="mRNA"/>
</dbReference>
<dbReference type="EMBL" id="BC007219">
    <property type="protein sequence ID" value="AAH07219.1"/>
    <property type="molecule type" value="mRNA"/>
</dbReference>
<dbReference type="CCDS" id="CCDS58099.1">
    <molecule id="Q9BTE3-2"/>
</dbReference>
<dbReference type="CCDS" id="CCDS7617.1">
    <molecule id="Q9BTE3-1"/>
</dbReference>
<dbReference type="RefSeq" id="NP_001243307.1">
    <molecule id="Q9BTE3-2"/>
    <property type="nucleotide sequence ID" value="NM_001256378.2"/>
</dbReference>
<dbReference type="RefSeq" id="NP_001243308.1">
    <molecule id="Q9BTE3-3"/>
    <property type="nucleotide sequence ID" value="NM_001256379.2"/>
</dbReference>
<dbReference type="RefSeq" id="NP_079110.1">
    <molecule id="Q9BTE3-1"/>
    <property type="nucleotide sequence ID" value="NM_024834.4"/>
</dbReference>
<dbReference type="PDB" id="4KG9">
    <property type="method" value="X-ray"/>
    <property type="resolution" value="1.70 A"/>
    <property type="chains" value="B=152-161"/>
</dbReference>
<dbReference type="PDBsum" id="4KG9"/>
<dbReference type="SMR" id="Q9BTE3"/>
<dbReference type="BioGRID" id="122976">
    <property type="interactions" value="167"/>
</dbReference>
<dbReference type="FunCoup" id="Q9BTE3">
    <property type="interactions" value="4512"/>
</dbReference>
<dbReference type="IntAct" id="Q9BTE3">
    <property type="interactions" value="62"/>
</dbReference>
<dbReference type="MINT" id="Q9BTE3"/>
<dbReference type="STRING" id="9606.ENSP00000353098"/>
<dbReference type="GlyCosmos" id="Q9BTE3">
    <property type="glycosylation" value="1 site, 1 glycan"/>
</dbReference>
<dbReference type="GlyGen" id="Q9BTE3">
    <property type="glycosylation" value="2 sites, 1 O-linked glycan (2 sites)"/>
</dbReference>
<dbReference type="iPTMnet" id="Q9BTE3"/>
<dbReference type="MetOSite" id="Q9BTE3"/>
<dbReference type="PhosphoSitePlus" id="Q9BTE3"/>
<dbReference type="BioMuta" id="MCMBP"/>
<dbReference type="DMDM" id="71153001"/>
<dbReference type="jPOST" id="Q9BTE3"/>
<dbReference type="MassIVE" id="Q9BTE3"/>
<dbReference type="PaxDb" id="9606-ENSP00000353098"/>
<dbReference type="PeptideAtlas" id="Q9BTE3"/>
<dbReference type="ProteomicsDB" id="78982">
    <molecule id="Q9BTE3-1"/>
</dbReference>
<dbReference type="ProteomicsDB" id="78983">
    <molecule id="Q9BTE3-2"/>
</dbReference>
<dbReference type="ProteomicsDB" id="78984">
    <molecule id="Q9BTE3-3"/>
</dbReference>
<dbReference type="Pumba" id="Q9BTE3"/>
<dbReference type="ABCD" id="Q9BTE3">
    <property type="antibodies" value="2 sequenced antibodies"/>
</dbReference>
<dbReference type="Antibodypedia" id="46307">
    <property type="antibodies" value="146 antibodies from 26 providers"/>
</dbReference>
<dbReference type="DNASU" id="79892"/>
<dbReference type="Ensembl" id="ENST00000360003.7">
    <molecule id="Q9BTE3-1"/>
    <property type="protein sequence ID" value="ENSP00000353098.3"/>
    <property type="gene ID" value="ENSG00000197771.13"/>
</dbReference>
<dbReference type="Ensembl" id="ENST00000369077.4">
    <molecule id="Q9BTE3-2"/>
    <property type="protein sequence ID" value="ENSP00000358073.3"/>
    <property type="gene ID" value="ENSG00000197771.13"/>
</dbReference>
<dbReference type="GeneID" id="79892"/>
<dbReference type="KEGG" id="hsa:79892"/>
<dbReference type="MANE-Select" id="ENST00000369077.4">
    <molecule id="Q9BTE3-2"/>
    <property type="protein sequence ID" value="ENSP00000358073.3"/>
    <property type="RefSeq nucleotide sequence ID" value="NM_001256378.2"/>
    <property type="RefSeq protein sequence ID" value="NP_001243307.1"/>
</dbReference>
<dbReference type="UCSC" id="uc001leq.3">
    <molecule id="Q9BTE3-1"/>
    <property type="organism name" value="human"/>
</dbReference>
<dbReference type="AGR" id="HGNC:25782"/>
<dbReference type="CTD" id="79892"/>
<dbReference type="DisGeNET" id="79892"/>
<dbReference type="GeneCards" id="MCMBP"/>
<dbReference type="HGNC" id="HGNC:25782">
    <property type="gene designation" value="MCMBP"/>
</dbReference>
<dbReference type="HPA" id="ENSG00000197771">
    <property type="expression patterns" value="Low tissue specificity"/>
</dbReference>
<dbReference type="MIM" id="610909">
    <property type="type" value="gene"/>
</dbReference>
<dbReference type="neXtProt" id="NX_Q9BTE3"/>
<dbReference type="OpenTargets" id="ENSG00000197771"/>
<dbReference type="PharmGKB" id="PA134862625"/>
<dbReference type="VEuPathDB" id="HostDB:ENSG00000197771"/>
<dbReference type="eggNOG" id="KOG2545">
    <property type="taxonomic scope" value="Eukaryota"/>
</dbReference>
<dbReference type="GeneTree" id="ENSGT00390000017265"/>
<dbReference type="HOGENOM" id="CLU_029811_0_0_1"/>
<dbReference type="InParanoid" id="Q9BTE3"/>
<dbReference type="OMA" id="EEHTEMI"/>
<dbReference type="OrthoDB" id="329666at2759"/>
<dbReference type="PAN-GO" id="Q9BTE3">
    <property type="GO annotations" value="2 GO annotations based on evolutionary models"/>
</dbReference>
<dbReference type="PhylomeDB" id="Q9BTE3"/>
<dbReference type="TreeFam" id="TF324793"/>
<dbReference type="PathwayCommons" id="Q9BTE3"/>
<dbReference type="SignaLink" id="Q9BTE3"/>
<dbReference type="BioGRID-ORCS" id="79892">
    <property type="hits" value="517 hits in 1165 CRISPR screens"/>
</dbReference>
<dbReference type="ChiTaRS" id="MCMBP">
    <property type="organism name" value="human"/>
</dbReference>
<dbReference type="EvolutionaryTrace" id="Q9BTE3"/>
<dbReference type="GenomeRNAi" id="79892"/>
<dbReference type="Pharos" id="Q9BTE3">
    <property type="development level" value="Tbio"/>
</dbReference>
<dbReference type="PRO" id="PR:Q9BTE3"/>
<dbReference type="Proteomes" id="UP000005640">
    <property type="component" value="Chromosome 10"/>
</dbReference>
<dbReference type="RNAct" id="Q9BTE3">
    <property type="molecule type" value="protein"/>
</dbReference>
<dbReference type="Bgee" id="ENSG00000197771">
    <property type="expression patterns" value="Expressed in oocyte and 192 other cell types or tissues"/>
</dbReference>
<dbReference type="ExpressionAtlas" id="Q9BTE3">
    <property type="expression patterns" value="baseline and differential"/>
</dbReference>
<dbReference type="GO" id="GO:0030054">
    <property type="term" value="C:cell junction"/>
    <property type="evidence" value="ECO:0000314"/>
    <property type="project" value="HPA"/>
</dbReference>
<dbReference type="GO" id="GO:0005829">
    <property type="term" value="C:cytosol"/>
    <property type="evidence" value="ECO:0000314"/>
    <property type="project" value="HPA"/>
</dbReference>
<dbReference type="GO" id="GO:0005654">
    <property type="term" value="C:nucleoplasm"/>
    <property type="evidence" value="ECO:0000314"/>
    <property type="project" value="HPA"/>
</dbReference>
<dbReference type="GO" id="GO:0005634">
    <property type="term" value="C:nucleus"/>
    <property type="evidence" value="ECO:0000314"/>
    <property type="project" value="UniProtKB"/>
</dbReference>
<dbReference type="GO" id="GO:0003682">
    <property type="term" value="F:chromatin binding"/>
    <property type="evidence" value="ECO:0000314"/>
    <property type="project" value="UniProtKB"/>
</dbReference>
<dbReference type="GO" id="GO:0051301">
    <property type="term" value="P:cell division"/>
    <property type="evidence" value="ECO:0007669"/>
    <property type="project" value="UniProtKB-KW"/>
</dbReference>
<dbReference type="GO" id="GO:0006261">
    <property type="term" value="P:DNA-templated DNA replication"/>
    <property type="evidence" value="ECO:0000315"/>
    <property type="project" value="UniProtKB"/>
</dbReference>
<dbReference type="GO" id="GO:0007062">
    <property type="term" value="P:sister chromatid cohesion"/>
    <property type="evidence" value="ECO:0000315"/>
    <property type="project" value="UniProtKB"/>
</dbReference>
<dbReference type="InterPro" id="IPR019140">
    <property type="entry name" value="MCM_complex-bd"/>
</dbReference>
<dbReference type="PANTHER" id="PTHR13489">
    <property type="entry name" value="MINI-CHROMOSOME MAINTENANCE COMPLEX-BINDING PROTEIN"/>
    <property type="match status" value="1"/>
</dbReference>
<dbReference type="PANTHER" id="PTHR13489:SF0">
    <property type="entry name" value="MINI-CHROMOSOME MAINTENANCE COMPLEX-BINDING PROTEIN"/>
    <property type="match status" value="1"/>
</dbReference>
<dbReference type="Pfam" id="PF09739">
    <property type="entry name" value="MCM_bind"/>
    <property type="match status" value="1"/>
</dbReference>
<protein>
    <recommendedName>
        <fullName>Mini-chromosome maintenance complex-binding protein</fullName>
        <shortName>MCM-BP</shortName>
        <shortName>MCM-binding protein</shortName>
    </recommendedName>
</protein>
<organism>
    <name type="scientific">Homo sapiens</name>
    <name type="common">Human</name>
    <dbReference type="NCBI Taxonomy" id="9606"/>
    <lineage>
        <taxon>Eukaryota</taxon>
        <taxon>Metazoa</taxon>
        <taxon>Chordata</taxon>
        <taxon>Craniata</taxon>
        <taxon>Vertebrata</taxon>
        <taxon>Euteleostomi</taxon>
        <taxon>Mammalia</taxon>
        <taxon>Eutheria</taxon>
        <taxon>Euarchontoglires</taxon>
        <taxon>Primates</taxon>
        <taxon>Haplorrhini</taxon>
        <taxon>Catarrhini</taxon>
        <taxon>Hominidae</taxon>
        <taxon>Homo</taxon>
    </lineage>
</organism>
<comment type="function">
    <text evidence="3 5">Associated component of the MCM complex that acts as a regulator of DNA replication. Binds to the MCM complex during late S phase and promotes the disassembly of the MCM complex from chromatin, thereby acting as a key regulator of pre-replication complex (pre-RC) unloading from replicated DNA. Can dissociate the MCM complex without addition of ATP; probably acts by destabilizing interactions of each individual subunits of the MCM complex. Required for sister chromatid cohesion.</text>
</comment>
<comment type="subunit">
    <text evidence="2 4">Interacts with the MCM complex: associates with the MCM3-7 complex which lacks MCM2, while it does not interact with the MCM complex when MCM2 is present (MCM2-7 complex). Interacts with the RPA complex, when composed of all RPA1, RPA2 and RPA3 components, but not with RPA1 or RPA2 alone.</text>
</comment>
<comment type="interaction">
    <interactant intactId="EBI-749378">
        <id>Q9BTE3</id>
    </interactant>
    <interactant intactId="EBI-374980">
        <id>O00311</id>
        <label>CDC7</label>
    </interactant>
    <organismsDiffer>false</organismsDiffer>
    <experiments>2</experiments>
</comment>
<comment type="interaction">
    <interactant intactId="EBI-749378">
        <id>Q9BTE3</id>
    </interactant>
    <interactant intactId="EBI-747491">
        <id>Q9Y248</id>
        <label>GINS2</label>
    </interactant>
    <organismsDiffer>false</organismsDiffer>
    <experiments>2</experiments>
</comment>
<comment type="interaction">
    <interactant intactId="EBI-749378">
        <id>Q9BTE3</id>
    </interactant>
    <interactant intactId="EBI-747500">
        <id>Q9BRT9</id>
        <label>GINS4</label>
    </interactant>
    <organismsDiffer>false</organismsDiffer>
    <experiments>2</experiments>
</comment>
<comment type="interaction">
    <interactant intactId="EBI-749378">
        <id>Q9BTE3</id>
    </interactant>
    <interactant intactId="EBI-374819">
        <id>P49736</id>
        <label>MCM2</label>
    </interactant>
    <organismsDiffer>false</organismsDiffer>
    <experiments>5</experiments>
</comment>
<comment type="interaction">
    <interactant intactId="EBI-749378">
        <id>Q9BTE3</id>
    </interactant>
    <interactant intactId="EBI-355153">
        <id>P25205</id>
        <label>MCM3</label>
    </interactant>
    <organismsDiffer>false</organismsDiffer>
    <experiments>13</experiments>
</comment>
<comment type="interaction">
    <interactant intactId="EBI-749378">
        <id>Q9BTE3</id>
    </interactant>
    <interactant intactId="EBI-374938">
        <id>P33991</id>
        <label>MCM4</label>
    </interactant>
    <organismsDiffer>false</organismsDiffer>
    <experiments>14</experiments>
</comment>
<comment type="interaction">
    <interactant intactId="EBI-749378">
        <id>Q9BTE3</id>
    </interactant>
    <interactant intactId="EBI-359410">
        <id>P33992</id>
        <label>MCM5</label>
    </interactant>
    <organismsDiffer>false</organismsDiffer>
    <experiments>16</experiments>
</comment>
<comment type="interaction">
    <interactant intactId="EBI-749378">
        <id>Q9BTE3</id>
    </interactant>
    <interactant intactId="EBI-374900">
        <id>Q14566</id>
        <label>MCM6</label>
    </interactant>
    <organismsDiffer>false</organismsDiffer>
    <experiments>15</experiments>
</comment>
<comment type="interaction">
    <interactant intactId="EBI-749378">
        <id>Q9BTE3</id>
    </interactant>
    <interactant intactId="EBI-355924">
        <id>P33993</id>
        <label>MCM7</label>
    </interactant>
    <organismsDiffer>false</organismsDiffer>
    <experiments>21</experiments>
</comment>
<comment type="interaction">
    <interactant intactId="EBI-749378">
        <id>Q9BTE3</id>
    </interactant>
    <interactant intactId="EBI-8756095">
        <id>Q9UJA3</id>
        <label>MCM8</label>
    </interactant>
    <organismsDiffer>false</organismsDiffer>
    <experiments>3</experiments>
</comment>
<comment type="interaction">
    <interactant intactId="EBI-749378">
        <id>Q9BTE3</id>
    </interactant>
    <interactant intactId="EBI-739759">
        <id>Q9NRG1</id>
        <label>PRTFDC1</label>
    </interactant>
    <organismsDiffer>false</organismsDiffer>
    <experiments>3</experiments>
</comment>
<comment type="interaction">
    <interactant intactId="EBI-749378">
        <id>Q9BTE3</id>
    </interactant>
    <interactant intactId="EBI-80718">
        <id>Q9UQE7</id>
        <label>SMC3</label>
    </interactant>
    <organismsDiffer>false</organismsDiffer>
    <experiments>6</experiments>
</comment>
<comment type="interaction">
    <interactant intactId="EBI-9384556">
        <id>Q9BTE3-2</id>
    </interactant>
    <interactant intactId="EBI-750131">
        <id>P04424</id>
        <label>ASL</label>
    </interactant>
    <organismsDiffer>false</organismsDiffer>
    <experiments>6</experiments>
</comment>
<comment type="interaction">
    <interactant intactId="EBI-9384556">
        <id>Q9BTE3-2</id>
    </interactant>
    <interactant intactId="EBI-742651">
        <id>P35638</id>
        <label>DDIT3</label>
    </interactant>
    <organismsDiffer>false</organismsDiffer>
    <experiments>3</experiments>
</comment>
<comment type="interaction">
    <interactant intactId="EBI-9384556">
        <id>Q9BTE3-2</id>
    </interactant>
    <interactant intactId="EBI-306914">
        <id>Q13451</id>
        <label>FKBP5</label>
    </interactant>
    <organismsDiffer>false</organismsDiffer>
    <experiments>4</experiments>
</comment>
<comment type="interaction">
    <interactant intactId="EBI-9384556">
        <id>Q9BTE3-2</id>
    </interactant>
    <interactant intactId="EBI-751001">
        <id>Q14145</id>
        <label>KEAP1</label>
    </interactant>
    <organismsDiffer>false</organismsDiffer>
    <experiments>3</experiments>
</comment>
<comment type="interaction">
    <interactant intactId="EBI-9384556">
        <id>Q9BTE3-2</id>
    </interactant>
    <interactant intactId="EBI-355924">
        <id>P33993</id>
        <label>MCM7</label>
    </interactant>
    <organismsDiffer>false</organismsDiffer>
    <experiments>6</experiments>
</comment>
<comment type="interaction">
    <interactant intactId="EBI-9384556">
        <id>Q9BTE3-2</id>
    </interactant>
    <interactant intactId="EBI-739759">
        <id>Q9NRG1</id>
        <label>PRTFDC1</label>
    </interactant>
    <organismsDiffer>false</organismsDiffer>
    <experiments>6</experiments>
</comment>
<comment type="interaction">
    <interactant intactId="EBI-9384556">
        <id>Q9BTE3-2</id>
    </interactant>
    <interactant intactId="EBI-17677006">
        <id>Q9UIY3</id>
        <label>RWDD2A</label>
    </interactant>
    <organismsDiffer>false</organismsDiffer>
    <experiments>3</experiments>
</comment>
<comment type="interaction">
    <interactant intactId="EBI-9384556">
        <id>Q9BTE3-2</id>
    </interactant>
    <interactant intactId="EBI-632715">
        <id>Q13573</id>
        <label>SNW1</label>
    </interactant>
    <organismsDiffer>false</organismsDiffer>
    <experiments>3</experiments>
</comment>
<comment type="interaction">
    <interactant intactId="EBI-9384556">
        <id>Q9BTE3-2</id>
    </interactant>
    <interactant intactId="EBI-17269964">
        <id>Q6S9Z5</id>
        <label>ZNF474</label>
    </interactant>
    <organismsDiffer>false</organismsDiffer>
    <experiments>3</experiments>
</comment>
<comment type="subcellular location">
    <subcellularLocation>
        <location evidence="2">Nucleus</location>
    </subcellularLocation>
    <text>Associates with chromatin. Highly associated with chromatin in G1/S and S phases, reduced binding to chromatin in G2, and further decreased binding in early M phase. It then reassociates with chromatin in late M phase. Dissociates from chromatin later than component of the MCM complex.</text>
</comment>
<comment type="alternative products">
    <event type="alternative splicing"/>
    <isoform>
        <id>Q9BTE3-1</id>
        <name>1</name>
        <sequence type="displayed"/>
    </isoform>
    <isoform>
        <id>Q9BTE3-2</id>
        <name>2</name>
        <sequence type="described" ref="VSP_014707"/>
    </isoform>
    <isoform>
        <id>Q9BTE3-3</id>
        <name>3</name>
        <sequence type="described" ref="VSP_040721 VSP_014707"/>
    </isoform>
</comment>
<comment type="similarity">
    <text evidence="8">Belongs to the MCMBP family.</text>
</comment>
<keyword id="KW-0002">3D-structure</keyword>
<keyword id="KW-0025">Alternative splicing</keyword>
<keyword id="KW-0131">Cell cycle</keyword>
<keyword id="KW-0132">Cell division</keyword>
<keyword id="KW-0235">DNA replication</keyword>
<keyword id="KW-0498">Mitosis</keyword>
<keyword id="KW-0539">Nucleus</keyword>
<keyword id="KW-0597">Phosphoprotein</keyword>
<keyword id="KW-1267">Proteomics identification</keyword>
<keyword id="KW-1185">Reference proteome</keyword>
<sequence length="642" mass="72980">MPCGEDWLSHPLGIVQGFFAQNGVNPDWEKKVIEYFKEKLKENNAPKWVPSLNEVPLHYLKPNSFVKFRCMIQDMFDPEFYMGVYETVNQNTKAHVLHFGKYRDVAECGPQQELDLNSPRNTTLERQTFYCVPVPGESTWVKEAYVNANQARVSPSTSYTPSRHKRSYEDDDDMDLQPNKQKDQHAGARQAGSVGGLQWCGEPKRLETEASTGQQLNSLNLSSPFDLNFPLPGEKGPACLVKVYEDWDCFKVNDILELYGILSVDPVLSILNNDERDASALLDPMECTDTAEEQRVHSPPASLVPRIHVILAQKLQHINPLLPACLNKEESKTCKFVSSFMSELSPVRAELLGFLTHALLGDSLAAEYLILHLISTVYTRRDVLPLGKFTVNLSGCPRNSTFTEHLYRIIQHLVPASFRLQMTIENMNHLKFIPHKDYTANRLVSGLLQLPSNTSLVIDETLLEQGQLDTPGVHNVTALSNLITWQKVDYDFSYHQMEFPCNINVFITSEGRSLLPADCQIHLQPQLIPPNMEEYMNSLLSAVLPSVLNKFRIYLTLLRFLEYSISDEITKAVEDDFVEMRKNDPQSITADDLHQLLVVARCLSLSAGQTTLSRERWLRAKQLESLRRTRLQQQKCVNGNEL</sequence>
<gene>
    <name type="primary">MCMBP</name>
    <name type="synonym">C10orf119</name>
</gene>
<name>MCMBP_HUMAN</name>
<proteinExistence type="evidence at protein level"/>
<accession>Q9BTE3</accession>
<accession>B3KSP7</accession>
<accession>Q6IA56</accession>
<accession>Q9BVT9</accession>
<accession>Q9H916</accession>